<name>MATK_BROPL</name>
<evidence type="ECO:0000255" key="1">
    <source>
        <dbReference type="HAMAP-Rule" id="MF_01390"/>
    </source>
</evidence>
<organism>
    <name type="scientific">Bromelia plumieri</name>
    <name type="common">Karatas</name>
    <dbReference type="NCBI Taxonomy" id="4617"/>
    <lineage>
        <taxon>Eukaryota</taxon>
        <taxon>Viridiplantae</taxon>
        <taxon>Streptophyta</taxon>
        <taxon>Embryophyta</taxon>
        <taxon>Tracheophyta</taxon>
        <taxon>Spermatophyta</taxon>
        <taxon>Magnoliopsida</taxon>
        <taxon>Liliopsida</taxon>
        <taxon>Poales</taxon>
        <taxon>Bromeliaceae</taxon>
        <taxon>Bromelioideae</taxon>
        <taxon>Bromelia</taxon>
    </lineage>
</organism>
<sequence length="511" mass="61078">MEELQGYLEKDRSRQQHFLYPLLFQEYIYAFAHDHGLNDSIFYEPVEIVGYDNKSSSVLVKRLIIRMYQQNYLINSVNYSNQNRFVGHNTYFYSHFFSQMISESFAVIVEIPFSLRLVSFPEEKEIPKCQNLRSIHSIFPFLEDKLSHLNYVSDILIPYPIHLEILVQILQCRIQDVPSLHLLRFLLHEYHNWNSLITPKKSIYVFSKENKRLFWFLYNSYVSECEFVFVFLRKQSSYLRLTSSGTFLERIQFYGKIEHLIVVYRNYFQKTLWFFTDPFMHYVRYQGKAILASKGTHLLMKKWKCYLVNLWQYYFHFWSQPHRIHINQLSNYSFYFLGYLSSVLRNPLVVRNQMLENSFLIETGIKKFDTIVPVIPLIGSLSKAKFCTVSGHPISKPVWTDLSDCDIIDRFGRICRNLSHYHSGSSKKQSLYRIKYILRLSCARTLARKHKSTVRSFLQRLGSVLLEEFFTEEEQVLSLIFPKPTPFSLHGSRRERIWYLDIIRINNLVNH</sequence>
<reference key="1">
    <citation type="journal article" date="2005" name="Am. J. Bot.">
        <title>Phylogenetic relationships in subfamily Tillandsioideae (Bromeliaceae) based on DNA sequence data from seven plastid regions.</title>
        <authorList>
            <person name="Barfuss M.H.J."/>
            <person name="Samuel R."/>
            <person name="Till W."/>
            <person name="Stuessy T.F."/>
        </authorList>
        <dbReference type="AGRICOLA" id="IND43689027"/>
    </citation>
    <scope>NUCLEOTIDE SEQUENCE [GENOMIC DNA]</scope>
    <source>
        <strain>MB-119</strain>
    </source>
</reference>
<geneLocation type="chloroplast"/>
<proteinExistence type="inferred from homology"/>
<protein>
    <recommendedName>
        <fullName evidence="1">Maturase K</fullName>
    </recommendedName>
    <alternativeName>
        <fullName evidence="1">Intron maturase</fullName>
    </alternativeName>
</protein>
<gene>
    <name evidence="1" type="primary">matK</name>
</gene>
<feature type="chain" id="PRO_0000143291" description="Maturase K">
    <location>
        <begin position="1"/>
        <end position="511"/>
    </location>
</feature>
<dbReference type="EMBL" id="AY614023">
    <property type="protein sequence ID" value="AAU87055.1"/>
    <property type="molecule type" value="Genomic_DNA"/>
</dbReference>
<dbReference type="GO" id="GO:0009507">
    <property type="term" value="C:chloroplast"/>
    <property type="evidence" value="ECO:0007669"/>
    <property type="project" value="UniProtKB-SubCell"/>
</dbReference>
<dbReference type="GO" id="GO:0003723">
    <property type="term" value="F:RNA binding"/>
    <property type="evidence" value="ECO:0007669"/>
    <property type="project" value="UniProtKB-KW"/>
</dbReference>
<dbReference type="GO" id="GO:0006397">
    <property type="term" value="P:mRNA processing"/>
    <property type="evidence" value="ECO:0007669"/>
    <property type="project" value="UniProtKB-KW"/>
</dbReference>
<dbReference type="GO" id="GO:0008380">
    <property type="term" value="P:RNA splicing"/>
    <property type="evidence" value="ECO:0007669"/>
    <property type="project" value="UniProtKB-UniRule"/>
</dbReference>
<dbReference type="GO" id="GO:0008033">
    <property type="term" value="P:tRNA processing"/>
    <property type="evidence" value="ECO:0007669"/>
    <property type="project" value="UniProtKB-KW"/>
</dbReference>
<dbReference type="HAMAP" id="MF_01390">
    <property type="entry name" value="MatK"/>
    <property type="match status" value="1"/>
</dbReference>
<dbReference type="InterPro" id="IPR024937">
    <property type="entry name" value="Domain_X"/>
</dbReference>
<dbReference type="InterPro" id="IPR002866">
    <property type="entry name" value="Maturase_MatK"/>
</dbReference>
<dbReference type="InterPro" id="IPR024942">
    <property type="entry name" value="Maturase_MatK_N"/>
</dbReference>
<dbReference type="PANTHER" id="PTHR34811">
    <property type="entry name" value="MATURASE K"/>
    <property type="match status" value="1"/>
</dbReference>
<dbReference type="PANTHER" id="PTHR34811:SF1">
    <property type="entry name" value="MATURASE K"/>
    <property type="match status" value="1"/>
</dbReference>
<dbReference type="Pfam" id="PF01348">
    <property type="entry name" value="Intron_maturas2"/>
    <property type="match status" value="1"/>
</dbReference>
<dbReference type="Pfam" id="PF01824">
    <property type="entry name" value="MatK_N"/>
    <property type="match status" value="1"/>
</dbReference>
<comment type="function">
    <text evidence="1">Usually encoded in the trnK tRNA gene intron. Probably assists in splicing its own and other chloroplast group II introns.</text>
</comment>
<comment type="subcellular location">
    <subcellularLocation>
        <location>Plastid</location>
        <location>Chloroplast</location>
    </subcellularLocation>
</comment>
<comment type="similarity">
    <text evidence="1">Belongs to the intron maturase 2 family. MatK subfamily.</text>
</comment>
<accession>Q5YB04</accession>
<keyword id="KW-0150">Chloroplast</keyword>
<keyword id="KW-0507">mRNA processing</keyword>
<keyword id="KW-0934">Plastid</keyword>
<keyword id="KW-0694">RNA-binding</keyword>
<keyword id="KW-0819">tRNA processing</keyword>